<name>RL7A_PYRCJ</name>
<dbReference type="EMBL" id="CP000561">
    <property type="protein sequence ID" value="ABO07876.1"/>
    <property type="molecule type" value="Genomic_DNA"/>
</dbReference>
<dbReference type="RefSeq" id="WP_011849134.1">
    <property type="nucleotide sequence ID" value="NC_009073.1"/>
</dbReference>
<dbReference type="PDB" id="9E6Q">
    <property type="method" value="EM"/>
    <property type="resolution" value="1.95 A"/>
    <property type="chains" value="AF=1-149"/>
</dbReference>
<dbReference type="PDB" id="9E71">
    <property type="method" value="EM"/>
    <property type="resolution" value="2.36 A"/>
    <property type="chains" value="AF=1-149"/>
</dbReference>
<dbReference type="PDB" id="9E7F">
    <property type="method" value="EM"/>
    <property type="resolution" value="2.53 A"/>
    <property type="chains" value="AF=1-149"/>
</dbReference>
<dbReference type="PDBsum" id="9E6Q"/>
<dbReference type="PDBsum" id="9E71"/>
<dbReference type="PDBsum" id="9E7F"/>
<dbReference type="EMDB" id="EMD-47578"/>
<dbReference type="EMDB" id="EMD-47628"/>
<dbReference type="EMDB" id="EMD-47668"/>
<dbReference type="SMR" id="A3MTA9"/>
<dbReference type="STRING" id="410359.Pcal_0443"/>
<dbReference type="GeneID" id="4908891"/>
<dbReference type="KEGG" id="pcl:Pcal_0443"/>
<dbReference type="eggNOG" id="arCOG01751">
    <property type="taxonomic scope" value="Archaea"/>
</dbReference>
<dbReference type="HOGENOM" id="CLU_084513_4_0_2"/>
<dbReference type="OrthoDB" id="25810at2157"/>
<dbReference type="Proteomes" id="UP000001431">
    <property type="component" value="Chromosome"/>
</dbReference>
<dbReference type="GO" id="GO:0005737">
    <property type="term" value="C:cytoplasm"/>
    <property type="evidence" value="ECO:0007669"/>
    <property type="project" value="UniProtKB-SubCell"/>
</dbReference>
<dbReference type="GO" id="GO:1990904">
    <property type="term" value="C:ribonucleoprotein complex"/>
    <property type="evidence" value="ECO:0007669"/>
    <property type="project" value="UniProtKB-KW"/>
</dbReference>
<dbReference type="GO" id="GO:0005840">
    <property type="term" value="C:ribosome"/>
    <property type="evidence" value="ECO:0007669"/>
    <property type="project" value="UniProtKB-KW"/>
</dbReference>
<dbReference type="GO" id="GO:0004526">
    <property type="term" value="F:ribonuclease P activity"/>
    <property type="evidence" value="ECO:0007669"/>
    <property type="project" value="UniProtKB-UniRule"/>
</dbReference>
<dbReference type="GO" id="GO:0019843">
    <property type="term" value="F:rRNA binding"/>
    <property type="evidence" value="ECO:0007669"/>
    <property type="project" value="UniProtKB-KW"/>
</dbReference>
<dbReference type="GO" id="GO:0003735">
    <property type="term" value="F:structural constituent of ribosome"/>
    <property type="evidence" value="ECO:0007669"/>
    <property type="project" value="InterPro"/>
</dbReference>
<dbReference type="GO" id="GO:0042254">
    <property type="term" value="P:ribosome biogenesis"/>
    <property type="evidence" value="ECO:0007669"/>
    <property type="project" value="InterPro"/>
</dbReference>
<dbReference type="GO" id="GO:0006412">
    <property type="term" value="P:translation"/>
    <property type="evidence" value="ECO:0007669"/>
    <property type="project" value="UniProtKB-UniRule"/>
</dbReference>
<dbReference type="GO" id="GO:0001682">
    <property type="term" value="P:tRNA 5'-leader removal"/>
    <property type="evidence" value="ECO:0007669"/>
    <property type="project" value="UniProtKB-UniRule"/>
</dbReference>
<dbReference type="FunFam" id="3.30.1330.30:FF:000020">
    <property type="entry name" value="50S ribosomal protein L7Ae"/>
    <property type="match status" value="1"/>
</dbReference>
<dbReference type="Gene3D" id="3.30.1330.30">
    <property type="match status" value="1"/>
</dbReference>
<dbReference type="HAMAP" id="MF_00326">
    <property type="entry name" value="Ribosomal_eL8"/>
    <property type="match status" value="1"/>
</dbReference>
<dbReference type="InterPro" id="IPR050257">
    <property type="entry name" value="eL8/uL1-like"/>
</dbReference>
<dbReference type="InterPro" id="IPR029064">
    <property type="entry name" value="Ribosomal_eL30-like_sf"/>
</dbReference>
<dbReference type="InterPro" id="IPR004037">
    <property type="entry name" value="Ribosomal_eL8-like_CS"/>
</dbReference>
<dbReference type="InterPro" id="IPR004038">
    <property type="entry name" value="Ribosomal_eL8/eL30/eS12/Gad45"/>
</dbReference>
<dbReference type="InterPro" id="IPR018492">
    <property type="entry name" value="Ribosomal_eL8/Nhp2"/>
</dbReference>
<dbReference type="InterPro" id="IPR022481">
    <property type="entry name" value="Ribosomal_eL8_arc"/>
</dbReference>
<dbReference type="NCBIfam" id="TIGR03677">
    <property type="entry name" value="eL8_ribo"/>
    <property type="match status" value="1"/>
</dbReference>
<dbReference type="PANTHER" id="PTHR23105">
    <property type="entry name" value="RIBOSOMAL PROTEIN L7AE FAMILY MEMBER"/>
    <property type="match status" value="1"/>
</dbReference>
<dbReference type="Pfam" id="PF01248">
    <property type="entry name" value="Ribosomal_L7Ae"/>
    <property type="match status" value="1"/>
</dbReference>
<dbReference type="PRINTS" id="PR00881">
    <property type="entry name" value="L7ARS6FAMILY"/>
</dbReference>
<dbReference type="PRINTS" id="PR00884">
    <property type="entry name" value="RIBOSOMALHS6"/>
</dbReference>
<dbReference type="SUPFAM" id="SSF55315">
    <property type="entry name" value="L30e-like"/>
    <property type="match status" value="1"/>
</dbReference>
<dbReference type="PROSITE" id="PS01082">
    <property type="entry name" value="RIBOSOMAL_L7AE"/>
    <property type="match status" value="1"/>
</dbReference>
<sequence length="149" mass="15991">MAVTIDPKTFYANPLPGKPFYVRFEVPSDVAEKALEILSIARQTGKIKKGTNETTKAVERGLAKLVLIAEDVDPPEVVAHLPLLCEEKKVPYVYVPSKEKLGKAAGINVAAAAAVVIEAGQAAGELEALVNKINEIRAKHGLNAIPVRR</sequence>
<protein>
    <recommendedName>
        <fullName evidence="1">Large ribosomal subunit protein eL8</fullName>
    </recommendedName>
    <alternativeName>
        <fullName evidence="2">50S ribosomal protein L7Ae</fullName>
    </alternativeName>
    <alternativeName>
        <fullName evidence="1">Ribosomal protein L8e</fullName>
    </alternativeName>
</protein>
<accession>A3MTA9</accession>
<comment type="function">
    <text evidence="1">Multifunctional RNA-binding protein that recognizes the K-turn motif in ribosomal RNA, the RNA component of RNase P, box H/ACA, box C/D and box C'/D' sRNAs.</text>
</comment>
<comment type="subunit">
    <text evidence="1">Part of the 50S ribosomal subunit. Probably part of the RNase P complex.</text>
</comment>
<comment type="subcellular location">
    <subcellularLocation>
        <location evidence="1">Cytoplasm</location>
    </subcellularLocation>
</comment>
<comment type="similarity">
    <text evidence="1">Belongs to the eukaryotic ribosomal protein eL8 family.</text>
</comment>
<evidence type="ECO:0000255" key="1">
    <source>
        <dbReference type="HAMAP-Rule" id="MF_00326"/>
    </source>
</evidence>
<evidence type="ECO:0000305" key="2"/>
<reference key="1">
    <citation type="submission" date="2007-02" db="EMBL/GenBank/DDBJ databases">
        <title>Complete sequence of Pyrobaculum calidifontis JCM 11548.</title>
        <authorList>
            <consortium name="US DOE Joint Genome Institute"/>
            <person name="Copeland A."/>
            <person name="Lucas S."/>
            <person name="Lapidus A."/>
            <person name="Barry K."/>
            <person name="Glavina del Rio T."/>
            <person name="Dalin E."/>
            <person name="Tice H."/>
            <person name="Pitluck S."/>
            <person name="Chain P."/>
            <person name="Malfatti S."/>
            <person name="Shin M."/>
            <person name="Vergez L."/>
            <person name="Schmutz J."/>
            <person name="Larimer F."/>
            <person name="Land M."/>
            <person name="Hauser L."/>
            <person name="Kyrpides N."/>
            <person name="Mikhailova N."/>
            <person name="Cozen A.E."/>
            <person name="Fitz-Gibbon S.T."/>
            <person name="House C.H."/>
            <person name="Saltikov C."/>
            <person name="Lowe T.M."/>
            <person name="Richardson P."/>
        </authorList>
    </citation>
    <scope>NUCLEOTIDE SEQUENCE [LARGE SCALE GENOMIC DNA]</scope>
    <source>
        <strain>DSM 21063 / JCM 11548 / VA1</strain>
    </source>
</reference>
<keyword id="KW-0002">3D-structure</keyword>
<keyword id="KW-0963">Cytoplasm</keyword>
<keyword id="KW-0687">Ribonucleoprotein</keyword>
<keyword id="KW-0689">Ribosomal protein</keyword>
<keyword id="KW-0694">RNA-binding</keyword>
<keyword id="KW-0699">rRNA-binding</keyword>
<keyword id="KW-0819">tRNA processing</keyword>
<gene>
    <name evidence="1" type="primary">rpl7ae</name>
    <name type="ordered locus">Pcal_0443</name>
</gene>
<organism>
    <name type="scientific">Pyrobaculum calidifontis (strain DSM 21063 / JCM 11548 / VA1)</name>
    <dbReference type="NCBI Taxonomy" id="410359"/>
    <lineage>
        <taxon>Archaea</taxon>
        <taxon>Thermoproteota</taxon>
        <taxon>Thermoprotei</taxon>
        <taxon>Thermoproteales</taxon>
        <taxon>Thermoproteaceae</taxon>
        <taxon>Pyrobaculum</taxon>
    </lineage>
</organism>
<proteinExistence type="evidence at protein level"/>
<feature type="chain" id="PRO_1000005032" description="Large ribosomal subunit protein eL8">
    <location>
        <begin position="1"/>
        <end position="149"/>
    </location>
</feature>